<proteinExistence type="evidence at protein level"/>
<reference key="1">
    <citation type="journal article" date="2005" name="Science">
        <title>The transcriptional landscape of the mammalian genome.</title>
        <authorList>
            <person name="Carninci P."/>
            <person name="Kasukawa T."/>
            <person name="Katayama S."/>
            <person name="Gough J."/>
            <person name="Frith M.C."/>
            <person name="Maeda N."/>
            <person name="Oyama R."/>
            <person name="Ravasi T."/>
            <person name="Lenhard B."/>
            <person name="Wells C."/>
            <person name="Kodzius R."/>
            <person name="Shimokawa K."/>
            <person name="Bajic V.B."/>
            <person name="Brenner S.E."/>
            <person name="Batalov S."/>
            <person name="Forrest A.R."/>
            <person name="Zavolan M."/>
            <person name="Davis M.J."/>
            <person name="Wilming L.G."/>
            <person name="Aidinis V."/>
            <person name="Allen J.E."/>
            <person name="Ambesi-Impiombato A."/>
            <person name="Apweiler R."/>
            <person name="Aturaliya R.N."/>
            <person name="Bailey T.L."/>
            <person name="Bansal M."/>
            <person name="Baxter L."/>
            <person name="Beisel K.W."/>
            <person name="Bersano T."/>
            <person name="Bono H."/>
            <person name="Chalk A.M."/>
            <person name="Chiu K.P."/>
            <person name="Choudhary V."/>
            <person name="Christoffels A."/>
            <person name="Clutterbuck D.R."/>
            <person name="Crowe M.L."/>
            <person name="Dalla E."/>
            <person name="Dalrymple B.P."/>
            <person name="de Bono B."/>
            <person name="Della Gatta G."/>
            <person name="di Bernardo D."/>
            <person name="Down T."/>
            <person name="Engstrom P."/>
            <person name="Fagiolini M."/>
            <person name="Faulkner G."/>
            <person name="Fletcher C.F."/>
            <person name="Fukushima T."/>
            <person name="Furuno M."/>
            <person name="Futaki S."/>
            <person name="Gariboldi M."/>
            <person name="Georgii-Hemming P."/>
            <person name="Gingeras T.R."/>
            <person name="Gojobori T."/>
            <person name="Green R.E."/>
            <person name="Gustincich S."/>
            <person name="Harbers M."/>
            <person name="Hayashi Y."/>
            <person name="Hensch T.K."/>
            <person name="Hirokawa N."/>
            <person name="Hill D."/>
            <person name="Huminiecki L."/>
            <person name="Iacono M."/>
            <person name="Ikeo K."/>
            <person name="Iwama A."/>
            <person name="Ishikawa T."/>
            <person name="Jakt M."/>
            <person name="Kanapin A."/>
            <person name="Katoh M."/>
            <person name="Kawasawa Y."/>
            <person name="Kelso J."/>
            <person name="Kitamura H."/>
            <person name="Kitano H."/>
            <person name="Kollias G."/>
            <person name="Krishnan S.P."/>
            <person name="Kruger A."/>
            <person name="Kummerfeld S.K."/>
            <person name="Kurochkin I.V."/>
            <person name="Lareau L.F."/>
            <person name="Lazarevic D."/>
            <person name="Lipovich L."/>
            <person name="Liu J."/>
            <person name="Liuni S."/>
            <person name="McWilliam S."/>
            <person name="Madan Babu M."/>
            <person name="Madera M."/>
            <person name="Marchionni L."/>
            <person name="Matsuda H."/>
            <person name="Matsuzawa S."/>
            <person name="Miki H."/>
            <person name="Mignone F."/>
            <person name="Miyake S."/>
            <person name="Morris K."/>
            <person name="Mottagui-Tabar S."/>
            <person name="Mulder N."/>
            <person name="Nakano N."/>
            <person name="Nakauchi H."/>
            <person name="Ng P."/>
            <person name="Nilsson R."/>
            <person name="Nishiguchi S."/>
            <person name="Nishikawa S."/>
            <person name="Nori F."/>
            <person name="Ohara O."/>
            <person name="Okazaki Y."/>
            <person name="Orlando V."/>
            <person name="Pang K.C."/>
            <person name="Pavan W.J."/>
            <person name="Pavesi G."/>
            <person name="Pesole G."/>
            <person name="Petrovsky N."/>
            <person name="Piazza S."/>
            <person name="Reed J."/>
            <person name="Reid J.F."/>
            <person name="Ring B.Z."/>
            <person name="Ringwald M."/>
            <person name="Rost B."/>
            <person name="Ruan Y."/>
            <person name="Salzberg S.L."/>
            <person name="Sandelin A."/>
            <person name="Schneider C."/>
            <person name="Schoenbach C."/>
            <person name="Sekiguchi K."/>
            <person name="Semple C.A."/>
            <person name="Seno S."/>
            <person name="Sessa L."/>
            <person name="Sheng Y."/>
            <person name="Shibata Y."/>
            <person name="Shimada H."/>
            <person name="Shimada K."/>
            <person name="Silva D."/>
            <person name="Sinclair B."/>
            <person name="Sperling S."/>
            <person name="Stupka E."/>
            <person name="Sugiura K."/>
            <person name="Sultana R."/>
            <person name="Takenaka Y."/>
            <person name="Taki K."/>
            <person name="Tammoja K."/>
            <person name="Tan S.L."/>
            <person name="Tang S."/>
            <person name="Taylor M.S."/>
            <person name="Tegner J."/>
            <person name="Teichmann S.A."/>
            <person name="Ueda H.R."/>
            <person name="van Nimwegen E."/>
            <person name="Verardo R."/>
            <person name="Wei C.L."/>
            <person name="Yagi K."/>
            <person name="Yamanishi H."/>
            <person name="Zabarovsky E."/>
            <person name="Zhu S."/>
            <person name="Zimmer A."/>
            <person name="Hide W."/>
            <person name="Bult C."/>
            <person name="Grimmond S.M."/>
            <person name="Teasdale R.D."/>
            <person name="Liu E.T."/>
            <person name="Brusic V."/>
            <person name="Quackenbush J."/>
            <person name="Wahlestedt C."/>
            <person name="Mattick J.S."/>
            <person name="Hume D.A."/>
            <person name="Kai C."/>
            <person name="Sasaki D."/>
            <person name="Tomaru Y."/>
            <person name="Fukuda S."/>
            <person name="Kanamori-Katayama M."/>
            <person name="Suzuki M."/>
            <person name="Aoki J."/>
            <person name="Arakawa T."/>
            <person name="Iida J."/>
            <person name="Imamura K."/>
            <person name="Itoh M."/>
            <person name="Kato T."/>
            <person name="Kawaji H."/>
            <person name="Kawagashira N."/>
            <person name="Kawashima T."/>
            <person name="Kojima M."/>
            <person name="Kondo S."/>
            <person name="Konno H."/>
            <person name="Nakano K."/>
            <person name="Ninomiya N."/>
            <person name="Nishio T."/>
            <person name="Okada M."/>
            <person name="Plessy C."/>
            <person name="Shibata K."/>
            <person name="Shiraki T."/>
            <person name="Suzuki S."/>
            <person name="Tagami M."/>
            <person name="Waki K."/>
            <person name="Watahiki A."/>
            <person name="Okamura-Oho Y."/>
            <person name="Suzuki H."/>
            <person name="Kawai J."/>
            <person name="Hayashizaki Y."/>
        </authorList>
    </citation>
    <scope>NUCLEOTIDE SEQUENCE [LARGE SCALE MRNA] (ISOFORM 1)</scope>
    <source>
        <strain>C57BL/6J</strain>
        <tissue>Testis</tissue>
    </source>
</reference>
<reference key="2">
    <citation type="journal article" date="2004" name="Genome Res.">
        <title>The status, quality, and expansion of the NIH full-length cDNA project: the Mammalian Gene Collection (MGC).</title>
        <authorList>
            <consortium name="The MGC Project Team"/>
        </authorList>
    </citation>
    <scope>NUCLEOTIDE SEQUENCE [LARGE SCALE MRNA] (ISOFORM 2)</scope>
    <source>
        <tissue>Limb</tissue>
    </source>
</reference>
<reference key="3">
    <citation type="journal article" date="2010" name="Cell">
        <title>A tissue-specific atlas of mouse protein phosphorylation and expression.</title>
        <authorList>
            <person name="Huttlin E.L."/>
            <person name="Jedrychowski M.P."/>
            <person name="Elias J.E."/>
            <person name="Goswami T."/>
            <person name="Rad R."/>
            <person name="Beausoleil S.A."/>
            <person name="Villen J."/>
            <person name="Haas W."/>
            <person name="Sowa M.E."/>
            <person name="Gygi S.P."/>
        </authorList>
    </citation>
    <scope>PHOSPHORYLATION [LARGE SCALE ANALYSIS] AT SER-414</scope>
    <scope>IDENTIFICATION BY MASS SPECTROMETRY [LARGE SCALE ANALYSIS]</scope>
    <source>
        <tissue>Brown adipose tissue</tissue>
        <tissue>Heart</tissue>
        <tissue>Kidney</tissue>
        <tissue>Lung</tissue>
        <tissue>Spleen</tissue>
        <tissue>Testis</tissue>
    </source>
</reference>
<reference key="4">
    <citation type="journal article" date="2022" name="Elife">
        <title>Androglobin, a chimeric mammalian globin, is required for male fertility.</title>
        <authorList>
            <person name="Keppner A."/>
            <person name="Correia M."/>
            <person name="Santambrogio S."/>
            <person name="Koay T.W."/>
            <person name="Maric D."/>
            <person name="Osterhof C."/>
            <person name="Winter D.V."/>
            <person name="Clerc A."/>
            <person name="Stumpe M."/>
            <person name="Chalmel F."/>
            <person name="Dewilde S."/>
            <person name="Odermatt A."/>
            <person name="Kressler D."/>
            <person name="Hankeln T."/>
            <person name="Wenger R.H."/>
            <person name="Hoogewijs D."/>
        </authorList>
    </citation>
    <scope>INTERACTION WITH ADGB</scope>
    <scope>SUBCELLULAR LOCATION</scope>
    <scope>PROTEOLYTIC CLEAVAGE</scope>
</reference>
<sequence length="452" mass="52422">MASCDEIKEHPRSLSMCGHVGFESLPDQLVDRSIEQGFCFNILCVGETGIGKSTLINTLFNTNFEELESSHFCPCVRLRAQTYELQESNVRLKLTIVNTVGFGDQINKEDSYQPIVDYIDDQFEAYLQEEVKIKRALFNYHDSRIHVCLYFIAPTGHSLRTLDLLTMKSLDNKVNIIPLIAKADTISKSELQKFKMKLMNELVINGVQIYQFPTDDDTTSKINGAMNGHLPFAVVGSMDEIKVGNKMVKGRQYPWGIVQVENENHCDFVKLREMLICTNMEDLREQTHMRHYELYRRCKLQEMGFVDMGPENKPLSLQETYEAKRHEFYGERQRKEEQMKQMFVQRVKEKEAILKEAERELQAKFEHLKRIHQEERMKLEEKRRMLEEESVAFAKKKATCELFPNQSFLASGSSIRKDKDRKKADGASAFCDCLTAQESVRLCISSPRKDMD</sequence>
<comment type="function">
    <text evidence="1 6">Filament-forming cytoskeletal GTPase (By similarity). May play a role in cytokinesis (Potential).</text>
</comment>
<comment type="subunit">
    <text evidence="1 4">Septins polymerize into heterooligomeric protein complexes that form filaments, and can associate with cellular membranes, actin filaments and microtubules. GTPase activity is required for filament formation (By similarity). Interacts with ADGB (PubMed:35700329).</text>
</comment>
<comment type="subcellular location">
    <subcellularLocation>
        <location evidence="2">Cytoplasm</location>
    </subcellularLocation>
    <subcellularLocation>
        <location evidence="1">Cytoplasm</location>
        <location evidence="1">Cytoskeleton</location>
    </subcellularLocation>
    <subcellularLocation>
        <location evidence="4">Cell projection</location>
        <location evidence="4">Cilium</location>
        <location evidence="4">Flagellum</location>
    </subcellularLocation>
    <text evidence="4">Detected in the annulus of the sperm flagellum and in the neck region in spermatids and mature sperm.</text>
</comment>
<comment type="alternative products">
    <event type="alternative splicing"/>
    <isoform>
        <id>Q8C650-1</id>
        <name>1</name>
        <sequence type="displayed"/>
    </isoform>
    <isoform>
        <id>Q8C650-2</id>
        <name>2</name>
        <sequence type="described" ref="VSP_014093"/>
    </isoform>
</comment>
<comment type="PTM">
    <text evidence="4">Proteolytically cleaved in vitro in a calmodulin-dependent manner.</text>
</comment>
<comment type="similarity">
    <text evidence="3">Belongs to the TRAFAC class TrmE-Era-EngA-EngB-Septin-like GTPase superfamily. Septin GTPase family.</text>
</comment>
<protein>
    <recommendedName>
        <fullName>Septin-10</fullName>
    </recommendedName>
</protein>
<name>SEP10_MOUSE</name>
<gene>
    <name evidence="7" type="primary">Septin10</name>
    <name evidence="7" type="synonym">Sept10</name>
</gene>
<feature type="chain" id="PRO_0000173539" description="Septin-10">
    <location>
        <begin position="1"/>
        <end position="452"/>
    </location>
</feature>
<feature type="domain" description="Septin-type G" evidence="3">
    <location>
        <begin position="36"/>
        <end position="302"/>
    </location>
</feature>
<feature type="region of interest" description="G1 motif" evidence="3">
    <location>
        <begin position="46"/>
        <end position="53"/>
    </location>
</feature>
<feature type="region of interest" description="G3 motif" evidence="3">
    <location>
        <begin position="98"/>
        <end position="101"/>
    </location>
</feature>
<feature type="region of interest" description="G4 motif" evidence="3">
    <location>
        <begin position="181"/>
        <end position="184"/>
    </location>
</feature>
<feature type="binding site" evidence="1">
    <location>
        <begin position="46"/>
        <end position="53"/>
    </location>
    <ligand>
        <name>GTP</name>
        <dbReference type="ChEBI" id="CHEBI:37565"/>
    </ligand>
</feature>
<feature type="binding site" evidence="1">
    <location>
        <position position="101"/>
    </location>
    <ligand>
        <name>GTP</name>
        <dbReference type="ChEBI" id="CHEBI:37565"/>
    </ligand>
</feature>
<feature type="binding site" evidence="1">
    <location>
        <begin position="182"/>
        <end position="190"/>
    </location>
    <ligand>
        <name>GTP</name>
        <dbReference type="ChEBI" id="CHEBI:37565"/>
    </ligand>
</feature>
<feature type="binding site" evidence="1">
    <location>
        <position position="236"/>
    </location>
    <ligand>
        <name>GTP</name>
        <dbReference type="ChEBI" id="CHEBI:37565"/>
    </ligand>
</feature>
<feature type="binding site" evidence="1">
    <location>
        <position position="251"/>
    </location>
    <ligand>
        <name>GTP</name>
        <dbReference type="ChEBI" id="CHEBI:37565"/>
    </ligand>
</feature>
<feature type="modified residue" description="Phosphoserine" evidence="8">
    <location>
        <position position="414"/>
    </location>
</feature>
<feature type="splice variant" id="VSP_014093" description="In isoform 2." evidence="5">
    <original>KADGASAFCDCLTAQESVRLCISSPRKDMD</original>
    <variation>NSNFM</variation>
    <location>
        <begin position="423"/>
        <end position="452"/>
    </location>
</feature>
<feature type="sequence conflict" description="In Ref. 2; AAH53752." evidence="6" ref="2">
    <original>V</original>
    <variation>L</variation>
    <location>
        <position position="131"/>
    </location>
</feature>
<dbReference type="EMBL" id="AK076569">
    <property type="protein sequence ID" value="BAC36397.1"/>
    <property type="molecule type" value="mRNA"/>
</dbReference>
<dbReference type="EMBL" id="BC053752">
    <property type="protein sequence ID" value="AAH53752.1"/>
    <property type="molecule type" value="mRNA"/>
</dbReference>
<dbReference type="CCDS" id="CCDS48566.1">
    <molecule id="Q8C650-2"/>
</dbReference>
<dbReference type="CCDS" id="CCDS88009.1">
    <molecule id="Q8C650-1"/>
</dbReference>
<dbReference type="RefSeq" id="NP_001020081.2">
    <property type="nucleotide sequence ID" value="NM_001024910.3"/>
</dbReference>
<dbReference type="RefSeq" id="NP_001020082.1">
    <property type="nucleotide sequence ID" value="NM_001024911.2"/>
</dbReference>
<dbReference type="SMR" id="Q8C650"/>
<dbReference type="BioGRID" id="222009">
    <property type="interactions" value="2"/>
</dbReference>
<dbReference type="FunCoup" id="Q8C650">
    <property type="interactions" value="198"/>
</dbReference>
<dbReference type="IntAct" id="Q8C650">
    <property type="interactions" value="1"/>
</dbReference>
<dbReference type="STRING" id="10090.ENSMUSP00000129023"/>
<dbReference type="GlyGen" id="Q8C650">
    <property type="glycosylation" value="2 sites, 1 N-linked glycan (1 site), 1 O-linked glycan (1 site)"/>
</dbReference>
<dbReference type="iPTMnet" id="Q8C650"/>
<dbReference type="PhosphoSitePlus" id="Q8C650"/>
<dbReference type="REPRODUCTION-2DPAGE" id="IPI00606459"/>
<dbReference type="jPOST" id="Q8C650"/>
<dbReference type="PaxDb" id="10090-ENSMUSP00000129023"/>
<dbReference type="PeptideAtlas" id="Q8C650"/>
<dbReference type="ProteomicsDB" id="261153">
    <molecule id="Q8C650-1"/>
</dbReference>
<dbReference type="ProteomicsDB" id="261154">
    <molecule id="Q8C650-2"/>
</dbReference>
<dbReference type="Pumba" id="Q8C650"/>
<dbReference type="DNASU" id="103080"/>
<dbReference type="GeneID" id="103080"/>
<dbReference type="KEGG" id="mmu:103080"/>
<dbReference type="UCSC" id="uc007fdm.1">
    <molecule id="Q8C650-1"/>
    <property type="organism name" value="mouse"/>
</dbReference>
<dbReference type="UCSC" id="uc007fdn.2">
    <molecule id="Q8C650-2"/>
    <property type="organism name" value="mouse"/>
</dbReference>
<dbReference type="AGR" id="MGI:1918110"/>
<dbReference type="CTD" id="151011"/>
<dbReference type="MGI" id="MGI:1918110">
    <property type="gene designation" value="Septin10"/>
</dbReference>
<dbReference type="eggNOG" id="KOG3859">
    <property type="taxonomic scope" value="Eukaryota"/>
</dbReference>
<dbReference type="InParanoid" id="Q8C650"/>
<dbReference type="OrthoDB" id="416553at2759"/>
<dbReference type="PhylomeDB" id="Q8C650"/>
<dbReference type="TreeFam" id="TF101080"/>
<dbReference type="BioGRID-ORCS" id="103080">
    <property type="hits" value="1 hit in 52 CRISPR screens"/>
</dbReference>
<dbReference type="CD-CODE" id="CE726F99">
    <property type="entry name" value="Postsynaptic density"/>
</dbReference>
<dbReference type="PRO" id="PR:Q8C650"/>
<dbReference type="Proteomes" id="UP000000589">
    <property type="component" value="Unplaced"/>
</dbReference>
<dbReference type="RNAct" id="Q8C650">
    <property type="molecule type" value="protein"/>
</dbReference>
<dbReference type="GO" id="GO:0005737">
    <property type="term" value="C:cytoplasm"/>
    <property type="evidence" value="ECO:0007669"/>
    <property type="project" value="UniProtKB-SubCell"/>
</dbReference>
<dbReference type="GO" id="GO:0005856">
    <property type="term" value="C:cytoskeleton"/>
    <property type="evidence" value="ECO:0007669"/>
    <property type="project" value="UniProtKB-SubCell"/>
</dbReference>
<dbReference type="GO" id="GO:0097227">
    <property type="term" value="C:sperm annulus"/>
    <property type="evidence" value="ECO:0000314"/>
    <property type="project" value="UniProtKB"/>
</dbReference>
<dbReference type="GO" id="GO:0036126">
    <property type="term" value="C:sperm flagellum"/>
    <property type="evidence" value="ECO:0000314"/>
    <property type="project" value="UniProtKB"/>
</dbReference>
<dbReference type="GO" id="GO:0005525">
    <property type="term" value="F:GTP binding"/>
    <property type="evidence" value="ECO:0007669"/>
    <property type="project" value="UniProtKB-KW"/>
</dbReference>
<dbReference type="GO" id="GO:0051301">
    <property type="term" value="P:cell division"/>
    <property type="evidence" value="ECO:0007669"/>
    <property type="project" value="UniProtKB-KW"/>
</dbReference>
<dbReference type="CDD" id="cd01850">
    <property type="entry name" value="CDC_Septin"/>
    <property type="match status" value="1"/>
</dbReference>
<dbReference type="FunFam" id="3.40.50.300:FF:000036">
    <property type="entry name" value="septin-6 isoform X2"/>
    <property type="match status" value="1"/>
</dbReference>
<dbReference type="Gene3D" id="3.40.50.300">
    <property type="entry name" value="P-loop containing nucleotide triphosphate hydrolases"/>
    <property type="match status" value="1"/>
</dbReference>
<dbReference type="InterPro" id="IPR030379">
    <property type="entry name" value="G_SEPTIN_dom"/>
</dbReference>
<dbReference type="InterPro" id="IPR027417">
    <property type="entry name" value="P-loop_NTPase"/>
</dbReference>
<dbReference type="InterPro" id="IPR016491">
    <property type="entry name" value="Septin"/>
</dbReference>
<dbReference type="PANTHER" id="PTHR18884">
    <property type="entry name" value="SEPTIN"/>
    <property type="match status" value="1"/>
</dbReference>
<dbReference type="Pfam" id="PF00735">
    <property type="entry name" value="Septin"/>
    <property type="match status" value="1"/>
</dbReference>
<dbReference type="PIRSF" id="PIRSF006698">
    <property type="entry name" value="Septin"/>
    <property type="match status" value="1"/>
</dbReference>
<dbReference type="SUPFAM" id="SSF52540">
    <property type="entry name" value="P-loop containing nucleoside triphosphate hydrolases"/>
    <property type="match status" value="1"/>
</dbReference>
<dbReference type="PROSITE" id="PS51719">
    <property type="entry name" value="G_SEPTIN"/>
    <property type="match status" value="1"/>
</dbReference>
<organism>
    <name type="scientific">Mus musculus</name>
    <name type="common">Mouse</name>
    <dbReference type="NCBI Taxonomy" id="10090"/>
    <lineage>
        <taxon>Eukaryota</taxon>
        <taxon>Metazoa</taxon>
        <taxon>Chordata</taxon>
        <taxon>Craniata</taxon>
        <taxon>Vertebrata</taxon>
        <taxon>Euteleostomi</taxon>
        <taxon>Mammalia</taxon>
        <taxon>Eutheria</taxon>
        <taxon>Euarchontoglires</taxon>
        <taxon>Glires</taxon>
        <taxon>Rodentia</taxon>
        <taxon>Myomorpha</taxon>
        <taxon>Muroidea</taxon>
        <taxon>Muridae</taxon>
        <taxon>Murinae</taxon>
        <taxon>Mus</taxon>
        <taxon>Mus</taxon>
    </lineage>
</organism>
<keyword id="KW-0025">Alternative splicing</keyword>
<keyword id="KW-0131">Cell cycle</keyword>
<keyword id="KW-0132">Cell division</keyword>
<keyword id="KW-0966">Cell projection</keyword>
<keyword id="KW-0969">Cilium</keyword>
<keyword id="KW-0963">Cytoplasm</keyword>
<keyword id="KW-0206">Cytoskeleton</keyword>
<keyword id="KW-0282">Flagellum</keyword>
<keyword id="KW-0342">GTP-binding</keyword>
<keyword id="KW-0547">Nucleotide-binding</keyword>
<keyword id="KW-0597">Phosphoprotein</keyword>
<keyword id="KW-1185">Reference proteome</keyword>
<accession>Q8C650</accession>
<accession>Q7TSA5</accession>
<evidence type="ECO:0000250" key="1"/>
<evidence type="ECO:0000250" key="2">
    <source>
        <dbReference type="UniProtKB" id="Q9P0V9"/>
    </source>
</evidence>
<evidence type="ECO:0000255" key="3">
    <source>
        <dbReference type="PROSITE-ProRule" id="PRU01056"/>
    </source>
</evidence>
<evidence type="ECO:0000269" key="4">
    <source>
    </source>
</evidence>
<evidence type="ECO:0000303" key="5">
    <source>
    </source>
</evidence>
<evidence type="ECO:0000305" key="6"/>
<evidence type="ECO:0000312" key="7">
    <source>
        <dbReference type="MGI" id="MGI:1918110"/>
    </source>
</evidence>
<evidence type="ECO:0007744" key="8">
    <source>
    </source>
</evidence>